<comment type="function">
    <text evidence="2">Member of the two-component regulatory system FilI/FilRs, which is involved in the regulation of methanogenesis. Regulates its own expression, expression of the filI-filR2 operon, and of genes involved in methanogenesis such as acs1, acs4 and mtrABC. Acts by binding to the promoters.</text>
</comment>
<comment type="induction">
    <text evidence="2">Autoregulated.</text>
</comment>
<comment type="PTM">
    <text evidence="2">Phosphorylated by FilI.</text>
</comment>
<name>FILR1_METH6</name>
<evidence type="ECO:0000255" key="1">
    <source>
        <dbReference type="PROSITE-ProRule" id="PRU00169"/>
    </source>
</evidence>
<evidence type="ECO:0000269" key="2">
    <source>
    </source>
</evidence>
<evidence type="ECO:0000303" key="3">
    <source>
    </source>
</evidence>
<evidence type="ECO:0000305" key="4"/>
<evidence type="ECO:0000312" key="5">
    <source>
        <dbReference type="EMBL" id="AET63830.1"/>
    </source>
</evidence>
<protein>
    <recommendedName>
        <fullName evidence="4">Methanogenesis regulatory protein FilR1</fullName>
    </recommendedName>
</protein>
<keyword id="KW-0238">DNA-binding</keyword>
<keyword id="KW-0597">Phosphoprotein</keyword>
<keyword id="KW-1185">Reference proteome</keyword>
<keyword id="KW-0804">Transcription</keyword>
<keyword id="KW-0805">Transcription regulation</keyword>
<keyword id="KW-0902">Two-component regulatory system</keyword>
<proteinExistence type="evidence at protein level"/>
<dbReference type="EMBL" id="CP003117">
    <property type="protein sequence ID" value="AET63830.1"/>
    <property type="molecule type" value="Genomic_DNA"/>
</dbReference>
<dbReference type="RefSeq" id="WP_014586015.1">
    <property type="nucleotide sequence ID" value="NC_017527.1"/>
</dbReference>
<dbReference type="SMR" id="G7WMP6"/>
<dbReference type="STRING" id="1110509.Mhar_0445"/>
<dbReference type="GeneID" id="12509614"/>
<dbReference type="KEGG" id="mhi:Mhar_0445"/>
<dbReference type="PATRIC" id="fig|1110509.7.peg.497"/>
<dbReference type="HOGENOM" id="CLU_613410_0_0_2"/>
<dbReference type="OrthoDB" id="11410at2157"/>
<dbReference type="Proteomes" id="UP000005877">
    <property type="component" value="Chromosome"/>
</dbReference>
<dbReference type="GO" id="GO:0005829">
    <property type="term" value="C:cytosol"/>
    <property type="evidence" value="ECO:0007669"/>
    <property type="project" value="TreeGrafter"/>
</dbReference>
<dbReference type="GO" id="GO:0032993">
    <property type="term" value="C:protein-DNA complex"/>
    <property type="evidence" value="ECO:0007669"/>
    <property type="project" value="TreeGrafter"/>
</dbReference>
<dbReference type="GO" id="GO:0000156">
    <property type="term" value="F:phosphorelay response regulator activity"/>
    <property type="evidence" value="ECO:0007669"/>
    <property type="project" value="TreeGrafter"/>
</dbReference>
<dbReference type="GO" id="GO:0000976">
    <property type="term" value="F:transcription cis-regulatory region binding"/>
    <property type="evidence" value="ECO:0007669"/>
    <property type="project" value="TreeGrafter"/>
</dbReference>
<dbReference type="GO" id="GO:0006355">
    <property type="term" value="P:regulation of DNA-templated transcription"/>
    <property type="evidence" value="ECO:0007669"/>
    <property type="project" value="TreeGrafter"/>
</dbReference>
<dbReference type="CDD" id="cd00156">
    <property type="entry name" value="REC"/>
    <property type="match status" value="1"/>
</dbReference>
<dbReference type="Gene3D" id="3.40.50.2300">
    <property type="match status" value="1"/>
</dbReference>
<dbReference type="InterPro" id="IPR011006">
    <property type="entry name" value="CheY-like_superfamily"/>
</dbReference>
<dbReference type="InterPro" id="IPR013561">
    <property type="entry name" value="FilR1_middle_dom"/>
</dbReference>
<dbReference type="InterPro" id="IPR001789">
    <property type="entry name" value="Sig_transdc_resp-reg_receiver"/>
</dbReference>
<dbReference type="InterPro" id="IPR039420">
    <property type="entry name" value="WalR-like"/>
</dbReference>
<dbReference type="InterPro" id="IPR036390">
    <property type="entry name" value="WH_DNA-bd_sf"/>
</dbReference>
<dbReference type="PANTHER" id="PTHR48111">
    <property type="entry name" value="REGULATOR OF RPOS"/>
    <property type="match status" value="1"/>
</dbReference>
<dbReference type="PANTHER" id="PTHR48111:SF1">
    <property type="entry name" value="TWO-COMPONENT RESPONSE REGULATOR ORR33"/>
    <property type="match status" value="1"/>
</dbReference>
<dbReference type="Pfam" id="PF08350">
    <property type="entry name" value="FilR1_middle"/>
    <property type="match status" value="1"/>
</dbReference>
<dbReference type="Pfam" id="PF00072">
    <property type="entry name" value="Response_reg"/>
    <property type="match status" value="1"/>
</dbReference>
<dbReference type="SMART" id="SM00448">
    <property type="entry name" value="REC"/>
    <property type="match status" value="1"/>
</dbReference>
<dbReference type="SUPFAM" id="SSF52172">
    <property type="entry name" value="CheY-like"/>
    <property type="match status" value="1"/>
</dbReference>
<dbReference type="SUPFAM" id="SSF46785">
    <property type="entry name" value="Winged helix' DNA-binding domain"/>
    <property type="match status" value="1"/>
</dbReference>
<dbReference type="PROSITE" id="PS50110">
    <property type="entry name" value="RESPONSE_REGULATORY"/>
    <property type="match status" value="1"/>
</dbReference>
<reference key="1">
    <citation type="journal article" date="2012" name="PLoS ONE">
        <title>The genome characteristics and predicted function of methyl-group oxidation pathway in the obligate aceticlastic methanogens, Methanosaeta spp.</title>
        <authorList>
            <person name="Zhu J."/>
            <person name="Zheng H."/>
            <person name="Ai G."/>
            <person name="Zhang G."/>
            <person name="Liu D."/>
            <person name="Liu X."/>
            <person name="Dong X."/>
        </authorList>
    </citation>
    <scope>NUCLEOTIDE SEQUENCE [LARGE SCALE GENOMIC DNA]</scope>
    <source>
        <strain>6Ac</strain>
    </source>
</reference>
<reference key="2">
    <citation type="journal article" date="2014" name="PLoS ONE">
        <title>Characterization of an archaeal two-component system that regulates methanogenesis in Methanosaeta harundinacea.</title>
        <authorList>
            <person name="Li J."/>
            <person name="Zheng X."/>
            <person name="Guo X."/>
            <person name="Qi L."/>
            <person name="Dong X."/>
        </authorList>
    </citation>
    <scope>FUNCTION</scope>
    <scope>DNA-BINDING</scope>
    <scope>INDUCTION</scope>
    <scope>PHOSPHORYLATION</scope>
    <source>
        <strain>6Ac</strain>
    </source>
</reference>
<gene>
    <name evidence="3" type="primary">filR1</name>
    <name evidence="5" type="ordered locus">Mhar_0445</name>
</gene>
<feature type="chain" id="PRO_0000433371" description="Methanogenesis regulatory protein FilR1">
    <location>
        <begin position="1"/>
        <end position="446"/>
    </location>
</feature>
<feature type="domain" description="Response regulatory" evidence="1">
    <location>
        <begin position="297"/>
        <end position="416"/>
    </location>
</feature>
<feature type="modified residue" description="4-aspartylphosphate" evidence="1">
    <location>
        <position position="350"/>
    </location>
</feature>
<accession>G7WMP6</accession>
<sequence>MDERDMVKRVKVFASSELKLNILLCLKYREMDVNDLQGVLGGRNTTILHAIRDMTDDYLISRGRQGYRLTNLGKIRGCVLESLMGVLDDLEARPDFWLNHDISSIPPEMLERLSMLRRSEMVSTNPASPLEIHERLESLLSTSKKISAILPLLIFPKDSKVFTNALRRGSRVDLLMTEKIAGSLLDDGSISAYEVERLLKFESFRLRLIGEDLKLALFVTESFLYLGLYRHDGVYDVGTGAIYLGESAVAWGMELFEYYAQRSRELDEGDLTRVFRSSIQPEAEAPPLAGEDPGAFDVMIVEDDLGHATLIRRIFEESSPRWRVHHASQLQDALRWIEESYGRPFLVVADYLLPDGCGLDLAGKAERPLEVGFPLIILTGFGSEKIAAQAFKSGAMDYVVKEADSIQRLPEIAEEALLRWRELKRRAAGGEGHPSPQEGQGLPLKV</sequence>
<organism>
    <name type="scientific">Methanothrix harundinacea (strain 6Ac)</name>
    <name type="common">Methanosaeta harundinacea</name>
    <dbReference type="NCBI Taxonomy" id="1110509"/>
    <lineage>
        <taxon>Archaea</taxon>
        <taxon>Methanobacteriati</taxon>
        <taxon>Methanobacteriota</taxon>
        <taxon>Stenosarchaea group</taxon>
        <taxon>Methanomicrobia</taxon>
        <taxon>Methanotrichales</taxon>
        <taxon>Methanotrichaceae</taxon>
        <taxon>Methanothrix</taxon>
    </lineage>
</organism>